<accession>B5FBT9</accession>
<feature type="chain" id="PRO_1000195352" description="Protein-export protein SecB">
    <location>
        <begin position="1"/>
        <end position="156"/>
    </location>
</feature>
<organism>
    <name type="scientific">Aliivibrio fischeri (strain MJ11)</name>
    <name type="common">Vibrio fischeri</name>
    <dbReference type="NCBI Taxonomy" id="388396"/>
    <lineage>
        <taxon>Bacteria</taxon>
        <taxon>Pseudomonadati</taxon>
        <taxon>Pseudomonadota</taxon>
        <taxon>Gammaproteobacteria</taxon>
        <taxon>Vibrionales</taxon>
        <taxon>Vibrionaceae</taxon>
        <taxon>Aliivibrio</taxon>
    </lineage>
</organism>
<name>SECB_ALIFM</name>
<sequence>MAEAAQAQQQNFAIQRIFLKDVSFEAPNSPTMFQKEWNPDVKLDLDTQSRELGEGVYEVVLRLTVTVKNEEETAFLCEVQQGGIFTAGQMEEAQLAHCLGAFCPNILFPYARETISSLVVKGTFPQLNLAPVNFDALFMNYLQSQAQENAAAPSEA</sequence>
<dbReference type="EMBL" id="CP001139">
    <property type="protein sequence ID" value="ACH67086.1"/>
    <property type="molecule type" value="Genomic_DNA"/>
</dbReference>
<dbReference type="RefSeq" id="WP_005421204.1">
    <property type="nucleotide sequence ID" value="NC_011184.1"/>
</dbReference>
<dbReference type="SMR" id="B5FBT9"/>
<dbReference type="GeneID" id="54165071"/>
<dbReference type="KEGG" id="vfm:VFMJ11_2470"/>
<dbReference type="HOGENOM" id="CLU_111574_1_0_6"/>
<dbReference type="Proteomes" id="UP000001857">
    <property type="component" value="Chromosome I"/>
</dbReference>
<dbReference type="GO" id="GO:0005737">
    <property type="term" value="C:cytoplasm"/>
    <property type="evidence" value="ECO:0007669"/>
    <property type="project" value="UniProtKB-SubCell"/>
</dbReference>
<dbReference type="GO" id="GO:0051082">
    <property type="term" value="F:unfolded protein binding"/>
    <property type="evidence" value="ECO:0007669"/>
    <property type="project" value="InterPro"/>
</dbReference>
<dbReference type="GO" id="GO:0006457">
    <property type="term" value="P:protein folding"/>
    <property type="evidence" value="ECO:0007669"/>
    <property type="project" value="UniProtKB-UniRule"/>
</dbReference>
<dbReference type="GO" id="GO:0051262">
    <property type="term" value="P:protein tetramerization"/>
    <property type="evidence" value="ECO:0007669"/>
    <property type="project" value="InterPro"/>
</dbReference>
<dbReference type="GO" id="GO:0015031">
    <property type="term" value="P:protein transport"/>
    <property type="evidence" value="ECO:0007669"/>
    <property type="project" value="UniProtKB-UniRule"/>
</dbReference>
<dbReference type="Gene3D" id="3.10.420.10">
    <property type="entry name" value="SecB-like"/>
    <property type="match status" value="1"/>
</dbReference>
<dbReference type="HAMAP" id="MF_00821">
    <property type="entry name" value="SecB"/>
    <property type="match status" value="1"/>
</dbReference>
<dbReference type="InterPro" id="IPR003708">
    <property type="entry name" value="SecB"/>
</dbReference>
<dbReference type="InterPro" id="IPR035958">
    <property type="entry name" value="SecB-like_sf"/>
</dbReference>
<dbReference type="NCBIfam" id="NF004393">
    <property type="entry name" value="PRK05751.1-4"/>
    <property type="match status" value="1"/>
</dbReference>
<dbReference type="NCBIfam" id="TIGR00809">
    <property type="entry name" value="secB"/>
    <property type="match status" value="1"/>
</dbReference>
<dbReference type="PANTHER" id="PTHR36918">
    <property type="match status" value="1"/>
</dbReference>
<dbReference type="PANTHER" id="PTHR36918:SF1">
    <property type="entry name" value="PROTEIN-EXPORT PROTEIN SECB"/>
    <property type="match status" value="1"/>
</dbReference>
<dbReference type="Pfam" id="PF02556">
    <property type="entry name" value="SecB"/>
    <property type="match status" value="1"/>
</dbReference>
<dbReference type="PRINTS" id="PR01594">
    <property type="entry name" value="SECBCHAPRONE"/>
</dbReference>
<dbReference type="SUPFAM" id="SSF54611">
    <property type="entry name" value="SecB-like"/>
    <property type="match status" value="1"/>
</dbReference>
<protein>
    <recommendedName>
        <fullName evidence="1">Protein-export protein SecB</fullName>
    </recommendedName>
</protein>
<keyword id="KW-0143">Chaperone</keyword>
<keyword id="KW-0963">Cytoplasm</keyword>
<keyword id="KW-0653">Protein transport</keyword>
<keyword id="KW-0811">Translocation</keyword>
<keyword id="KW-0813">Transport</keyword>
<reference key="1">
    <citation type="submission" date="2008-08" db="EMBL/GenBank/DDBJ databases">
        <title>Complete sequence of Vibrio fischeri strain MJ11.</title>
        <authorList>
            <person name="Mandel M.J."/>
            <person name="Stabb E.V."/>
            <person name="Ruby E.G."/>
            <person name="Ferriera S."/>
            <person name="Johnson J."/>
            <person name="Kravitz S."/>
            <person name="Beeson K."/>
            <person name="Sutton G."/>
            <person name="Rogers Y.-H."/>
            <person name="Friedman R."/>
            <person name="Frazier M."/>
            <person name="Venter J.C."/>
        </authorList>
    </citation>
    <scope>NUCLEOTIDE SEQUENCE [LARGE SCALE GENOMIC DNA]</scope>
    <source>
        <strain>MJ11</strain>
    </source>
</reference>
<proteinExistence type="inferred from homology"/>
<comment type="function">
    <text evidence="1">One of the proteins required for the normal export of preproteins out of the cell cytoplasm. It is a molecular chaperone that binds to a subset of precursor proteins, maintaining them in a translocation-competent state. It also specifically binds to its receptor SecA.</text>
</comment>
<comment type="subunit">
    <text evidence="1">Homotetramer, a dimer of dimers. One homotetramer interacts with 1 SecA dimer.</text>
</comment>
<comment type="subcellular location">
    <subcellularLocation>
        <location evidence="1">Cytoplasm</location>
    </subcellularLocation>
</comment>
<comment type="similarity">
    <text evidence="1">Belongs to the SecB family.</text>
</comment>
<evidence type="ECO:0000255" key="1">
    <source>
        <dbReference type="HAMAP-Rule" id="MF_00821"/>
    </source>
</evidence>
<gene>
    <name evidence="1" type="primary">secB</name>
    <name type="ordered locus">VFMJ11_2470</name>
</gene>